<sequence>MGQKVHPNGIRLGIVKPWNSTWFANTKEFADNLDSDFKVRQYLTKELAKASVSRIVIERPAKSIRVTIHTARPGIVIGKKGEDVEKLRKVVADIAGVPAQINIAEVRKPELDAKLVADSITSQLERRVMFRRAMKRAVQNAMRLGAKGIKVEVSGRLGGAEIARTEWYREGRVPLHTLRADIDYNTSEAHTTYGVIGVKVWIFKGEILGGMAAVEQPEKPAAQPKKQQRKGRK</sequence>
<proteinExistence type="inferred from homology"/>
<keyword id="KW-0687">Ribonucleoprotein</keyword>
<keyword id="KW-0689">Ribosomal protein</keyword>
<keyword id="KW-0694">RNA-binding</keyword>
<keyword id="KW-0699">rRNA-binding</keyword>
<gene>
    <name evidence="1" type="primary">rpsC</name>
    <name type="ordered locus">ECSE_3589</name>
</gene>
<accession>B6I228</accession>
<comment type="function">
    <text evidence="1">Binds the lower part of the 30S subunit head. Binds mRNA in the 70S ribosome, positioning it for translation.</text>
</comment>
<comment type="subunit">
    <text evidence="1">Part of the 30S ribosomal subunit. Forms a tight complex with proteins S10 and S14.</text>
</comment>
<comment type="similarity">
    <text evidence="1">Belongs to the universal ribosomal protein uS3 family.</text>
</comment>
<reference key="1">
    <citation type="journal article" date="2008" name="DNA Res.">
        <title>Complete genome sequence and comparative analysis of the wild-type commensal Escherichia coli strain SE11 isolated from a healthy adult.</title>
        <authorList>
            <person name="Oshima K."/>
            <person name="Toh H."/>
            <person name="Ogura Y."/>
            <person name="Sasamoto H."/>
            <person name="Morita H."/>
            <person name="Park S.-H."/>
            <person name="Ooka T."/>
            <person name="Iyoda S."/>
            <person name="Taylor T.D."/>
            <person name="Hayashi T."/>
            <person name="Itoh K."/>
            <person name="Hattori M."/>
        </authorList>
    </citation>
    <scope>NUCLEOTIDE SEQUENCE [LARGE SCALE GENOMIC DNA]</scope>
    <source>
        <strain>SE11</strain>
    </source>
</reference>
<evidence type="ECO:0000255" key="1">
    <source>
        <dbReference type="HAMAP-Rule" id="MF_01309"/>
    </source>
</evidence>
<evidence type="ECO:0000305" key="2"/>
<name>RS3_ECOSE</name>
<organism>
    <name type="scientific">Escherichia coli (strain SE11)</name>
    <dbReference type="NCBI Taxonomy" id="409438"/>
    <lineage>
        <taxon>Bacteria</taxon>
        <taxon>Pseudomonadati</taxon>
        <taxon>Pseudomonadota</taxon>
        <taxon>Gammaproteobacteria</taxon>
        <taxon>Enterobacterales</taxon>
        <taxon>Enterobacteriaceae</taxon>
        <taxon>Escherichia</taxon>
    </lineage>
</organism>
<feature type="chain" id="PRO_1000140965" description="Small ribosomal subunit protein uS3">
    <location>
        <begin position="1"/>
        <end position="233"/>
    </location>
</feature>
<feature type="domain" description="KH type-2" evidence="1">
    <location>
        <begin position="39"/>
        <end position="107"/>
    </location>
</feature>
<protein>
    <recommendedName>
        <fullName evidence="1">Small ribosomal subunit protein uS3</fullName>
    </recommendedName>
    <alternativeName>
        <fullName evidence="2">30S ribosomal protein S3</fullName>
    </alternativeName>
</protein>
<dbReference type="EMBL" id="AP009240">
    <property type="protein sequence ID" value="BAG79113.1"/>
    <property type="molecule type" value="Genomic_DNA"/>
</dbReference>
<dbReference type="RefSeq" id="WP_000529945.1">
    <property type="nucleotide sequence ID" value="NC_011415.1"/>
</dbReference>
<dbReference type="SMR" id="B6I228"/>
<dbReference type="GeneID" id="97603663"/>
<dbReference type="KEGG" id="ecy:ECSE_3589"/>
<dbReference type="HOGENOM" id="CLU_058591_0_2_6"/>
<dbReference type="Proteomes" id="UP000008199">
    <property type="component" value="Chromosome"/>
</dbReference>
<dbReference type="GO" id="GO:0022627">
    <property type="term" value="C:cytosolic small ribosomal subunit"/>
    <property type="evidence" value="ECO:0007669"/>
    <property type="project" value="TreeGrafter"/>
</dbReference>
<dbReference type="GO" id="GO:0003729">
    <property type="term" value="F:mRNA binding"/>
    <property type="evidence" value="ECO:0007669"/>
    <property type="project" value="UniProtKB-UniRule"/>
</dbReference>
<dbReference type="GO" id="GO:0019843">
    <property type="term" value="F:rRNA binding"/>
    <property type="evidence" value="ECO:0007669"/>
    <property type="project" value="UniProtKB-UniRule"/>
</dbReference>
<dbReference type="GO" id="GO:0003735">
    <property type="term" value="F:structural constituent of ribosome"/>
    <property type="evidence" value="ECO:0007669"/>
    <property type="project" value="InterPro"/>
</dbReference>
<dbReference type="GO" id="GO:0006412">
    <property type="term" value="P:translation"/>
    <property type="evidence" value="ECO:0007669"/>
    <property type="project" value="UniProtKB-UniRule"/>
</dbReference>
<dbReference type="CDD" id="cd02412">
    <property type="entry name" value="KH-II_30S_S3"/>
    <property type="match status" value="1"/>
</dbReference>
<dbReference type="FunFam" id="3.30.1140.32:FF:000001">
    <property type="entry name" value="30S ribosomal protein S3"/>
    <property type="match status" value="1"/>
</dbReference>
<dbReference type="FunFam" id="3.30.300.20:FF:000001">
    <property type="entry name" value="30S ribosomal protein S3"/>
    <property type="match status" value="1"/>
</dbReference>
<dbReference type="Gene3D" id="3.30.300.20">
    <property type="match status" value="1"/>
</dbReference>
<dbReference type="Gene3D" id="3.30.1140.32">
    <property type="entry name" value="Ribosomal protein S3, C-terminal domain"/>
    <property type="match status" value="1"/>
</dbReference>
<dbReference type="HAMAP" id="MF_01309_B">
    <property type="entry name" value="Ribosomal_uS3_B"/>
    <property type="match status" value="1"/>
</dbReference>
<dbReference type="InterPro" id="IPR004087">
    <property type="entry name" value="KH_dom"/>
</dbReference>
<dbReference type="InterPro" id="IPR015946">
    <property type="entry name" value="KH_dom-like_a/b"/>
</dbReference>
<dbReference type="InterPro" id="IPR004044">
    <property type="entry name" value="KH_dom_type_2"/>
</dbReference>
<dbReference type="InterPro" id="IPR009019">
    <property type="entry name" value="KH_sf_prok-type"/>
</dbReference>
<dbReference type="InterPro" id="IPR036419">
    <property type="entry name" value="Ribosomal_S3_C_sf"/>
</dbReference>
<dbReference type="InterPro" id="IPR005704">
    <property type="entry name" value="Ribosomal_uS3_bac-typ"/>
</dbReference>
<dbReference type="InterPro" id="IPR001351">
    <property type="entry name" value="Ribosomal_uS3_C"/>
</dbReference>
<dbReference type="InterPro" id="IPR018280">
    <property type="entry name" value="Ribosomal_uS3_CS"/>
</dbReference>
<dbReference type="NCBIfam" id="TIGR01009">
    <property type="entry name" value="rpsC_bact"/>
    <property type="match status" value="1"/>
</dbReference>
<dbReference type="PANTHER" id="PTHR11760">
    <property type="entry name" value="30S/40S RIBOSOMAL PROTEIN S3"/>
    <property type="match status" value="1"/>
</dbReference>
<dbReference type="PANTHER" id="PTHR11760:SF19">
    <property type="entry name" value="SMALL RIBOSOMAL SUBUNIT PROTEIN US3C"/>
    <property type="match status" value="1"/>
</dbReference>
<dbReference type="Pfam" id="PF07650">
    <property type="entry name" value="KH_2"/>
    <property type="match status" value="1"/>
</dbReference>
<dbReference type="Pfam" id="PF00189">
    <property type="entry name" value="Ribosomal_S3_C"/>
    <property type="match status" value="1"/>
</dbReference>
<dbReference type="SMART" id="SM00322">
    <property type="entry name" value="KH"/>
    <property type="match status" value="1"/>
</dbReference>
<dbReference type="SUPFAM" id="SSF54814">
    <property type="entry name" value="Prokaryotic type KH domain (KH-domain type II)"/>
    <property type="match status" value="1"/>
</dbReference>
<dbReference type="SUPFAM" id="SSF54821">
    <property type="entry name" value="Ribosomal protein S3 C-terminal domain"/>
    <property type="match status" value="1"/>
</dbReference>
<dbReference type="PROSITE" id="PS50823">
    <property type="entry name" value="KH_TYPE_2"/>
    <property type="match status" value="1"/>
</dbReference>
<dbReference type="PROSITE" id="PS00548">
    <property type="entry name" value="RIBOSOMAL_S3"/>
    <property type="match status" value="1"/>
</dbReference>